<sequence>MKHPVYARYLEFDDVVLDLTSLIFLEFDNAQNEEYIIFMNVKKAFYKNFHITCDLSLETLTVLVYEKARLIVKQMEFEQPPNFVNFISFNATDNDNSMIIDLCSDARIIVAKKLTPDETYHQRVSGFLDFQKRNCIPRPPIESDPKVRDALDRELEIKLYK</sequence>
<feature type="chain" id="PRO_0000132993" description="Uncharacterized 19.0 kDa protein in LEF8-FP intergenic region">
    <location>
        <begin position="1"/>
        <end position="161"/>
    </location>
</feature>
<reference key="1">
    <citation type="journal article" date="1994" name="Virology">
        <title>The complete DNA sequence of Autographa californica nuclear polyhedrosis virus.</title>
        <authorList>
            <person name="Ayres M.D."/>
            <person name="Howard S.C."/>
            <person name="Kuzio J."/>
            <person name="Lopez-Ferber M."/>
            <person name="Possee R.D."/>
        </authorList>
    </citation>
    <scope>NUCLEOTIDE SEQUENCE [LARGE SCALE GENOMIC DNA]</scope>
    <source>
        <strain>C6</strain>
    </source>
</reference>
<keyword id="KW-1185">Reference proteome</keyword>
<organismHost>
    <name type="scientific">Lepidoptera</name>
    <name type="common">butterflies and moths</name>
    <dbReference type="NCBI Taxonomy" id="7088"/>
</organismHost>
<accession>P41461</accession>
<organism>
    <name type="scientific">Autographa californica nuclear polyhedrosis virus</name>
    <name type="common">AcMNPV</name>
    <dbReference type="NCBI Taxonomy" id="46015"/>
    <lineage>
        <taxon>Viruses</taxon>
        <taxon>Viruses incertae sedis</taxon>
        <taxon>Naldaviricetes</taxon>
        <taxon>Lefavirales</taxon>
        <taxon>Baculoviridae</taxon>
        <taxon>Alphabaculovirus</taxon>
        <taxon>Alphabaculovirus aucalifornicae</taxon>
    </lineage>
</organism>
<dbReference type="EMBL" id="L22858">
    <property type="protein sequence ID" value="AAA66687.1"/>
    <property type="molecule type" value="Genomic_DNA"/>
</dbReference>
<dbReference type="PIR" id="B72857">
    <property type="entry name" value="B72857"/>
</dbReference>
<dbReference type="RefSeq" id="NP_054087.1">
    <property type="nucleotide sequence ID" value="NC_001623.1"/>
</dbReference>
<dbReference type="GeneID" id="1403890"/>
<dbReference type="KEGG" id="vg:1403890"/>
<dbReference type="OrthoDB" id="19330at10239"/>
<dbReference type="Proteomes" id="UP000008292">
    <property type="component" value="Segment"/>
</dbReference>
<dbReference type="InterPro" id="IPR009264">
    <property type="entry name" value="AcMNPV_Orf57"/>
</dbReference>
<dbReference type="Pfam" id="PF06033">
    <property type="entry name" value="DUF918"/>
    <property type="match status" value="1"/>
</dbReference>
<proteinExistence type="predicted"/>
<protein>
    <recommendedName>
        <fullName>Uncharacterized 19.0 kDa protein in LEF8-FP intergenic region</fullName>
    </recommendedName>
</protein>
<name>Y057_NPVAC</name>